<accession>P08950</accession>
<proteinExistence type="evidence at protein level"/>
<dbReference type="EMBL" id="M21552">
    <property type="protein sequence ID" value="AAA49533.1"/>
    <property type="molecule type" value="mRNA"/>
</dbReference>
<dbReference type="PIR" id="B28945">
    <property type="entry name" value="B28945"/>
</dbReference>
<dbReference type="GO" id="GO:0005576">
    <property type="term" value="C:extracellular region"/>
    <property type="evidence" value="ECO:0007669"/>
    <property type="project" value="UniProtKB-SubCell"/>
</dbReference>
<dbReference type="GO" id="GO:0006952">
    <property type="term" value="P:defense response"/>
    <property type="evidence" value="ECO:0007669"/>
    <property type="project" value="UniProtKB-KW"/>
</dbReference>
<dbReference type="GO" id="GO:0007218">
    <property type="term" value="P:neuropeptide signaling pathway"/>
    <property type="evidence" value="ECO:0007669"/>
    <property type="project" value="InterPro"/>
</dbReference>
<dbReference type="InterPro" id="IPR000874">
    <property type="entry name" value="Bombesin"/>
</dbReference>
<dbReference type="Pfam" id="PF02044">
    <property type="entry name" value="Bombesin"/>
    <property type="match status" value="1"/>
</dbReference>
<dbReference type="PROSITE" id="PS00257">
    <property type="entry name" value="BOMBESIN"/>
    <property type="match status" value="1"/>
</dbReference>
<organism>
    <name type="scientific">Lithobates pipiens</name>
    <name type="common">Northern leopard frog</name>
    <name type="synonym">Rana pipiens</name>
    <dbReference type="NCBI Taxonomy" id="8404"/>
    <lineage>
        <taxon>Eukaryota</taxon>
        <taxon>Metazoa</taxon>
        <taxon>Chordata</taxon>
        <taxon>Craniata</taxon>
        <taxon>Vertebrata</taxon>
        <taxon>Euteleostomi</taxon>
        <taxon>Amphibia</taxon>
        <taxon>Batrachia</taxon>
        <taxon>Anura</taxon>
        <taxon>Neobatrachia</taxon>
        <taxon>Ranoidea</taxon>
        <taxon>Ranidae</taxon>
        <taxon>Lithobates</taxon>
    </lineage>
</organism>
<comment type="subcellular location">
    <subcellularLocation>
        <location>Secreted</location>
    </subcellularLocation>
</comment>
<comment type="tissue specificity">
    <text>Expressed by the skin glands.</text>
</comment>
<comment type="similarity">
    <text evidence="3">Belongs to the bombesin/neuromedin-B/ranatensin family.</text>
</comment>
<name>RANA_LITPI</name>
<evidence type="ECO:0000255" key="1"/>
<evidence type="ECO:0000269" key="2">
    <source ref="2"/>
</evidence>
<evidence type="ECO:0000305" key="3"/>
<protein>
    <recommendedName>
        <fullName>Ranatensin</fullName>
    </recommendedName>
</protein>
<sequence>MTTIPAIGILPIDFLTILLLFSFISHSVCVEFAEDAGELDKSNAFRRQVPQWAVGHFMGKRSLSDDTEQATMYSSRFVESTS</sequence>
<reference key="1">
    <citation type="journal article" date="1988" name="J. Biol. Chem.">
        <title>Molecular cloning of cDNAs encoding the human bombesin-like peptide neuromedin B. Chromosomal localization and comparison to cDNAs encoding its amphibian homolog ranatensin.</title>
        <authorList>
            <person name="Krane I.M."/>
            <person name="Naylor S.L."/>
            <person name="Helin-Davis D."/>
            <person name="Chin W.W."/>
            <person name="Spindel E.R."/>
        </authorList>
    </citation>
    <scope>NUCLEOTIDE SEQUENCE [MRNA]</scope>
    <source>
        <tissue>Skin</tissue>
    </source>
</reference>
<reference key="2">
    <citation type="journal article" date="1970" name="Fed. Proc.">
        <title>Isolation and structure of a new vasoactive polypeptide.</title>
        <authorList>
            <person name="Nakajima T."/>
            <person name="Tanimura T."/>
            <person name="Pisano J.J."/>
        </authorList>
    </citation>
    <scope>PROTEIN SEQUENCE OF 48-58</scope>
    <scope>AMIDATION AT MET-58</scope>
</reference>
<feature type="signal peptide" evidence="1">
    <location>
        <begin position="1"/>
        <end position="27"/>
    </location>
</feature>
<feature type="propeptide" id="PRO_0000003027" evidence="2">
    <location>
        <begin position="28"/>
        <end position="47"/>
    </location>
</feature>
<feature type="peptide" id="PRO_0000003028" description="Ranatensin">
    <location>
        <begin position="48"/>
        <end position="58"/>
    </location>
</feature>
<feature type="propeptide" id="PRO_0000003029">
    <location>
        <begin position="62"/>
        <end position="82"/>
    </location>
</feature>
<feature type="modified residue" description="Methionine amide" evidence="2">
    <location>
        <position position="58"/>
    </location>
</feature>
<keyword id="KW-0027">Amidation</keyword>
<keyword id="KW-0878">Amphibian defense peptide</keyword>
<keyword id="KW-0165">Cleavage on pair of basic residues</keyword>
<keyword id="KW-0903">Direct protein sequencing</keyword>
<keyword id="KW-0964">Secreted</keyword>
<keyword id="KW-0732">Signal</keyword>